<gene>
    <name evidence="1" type="primary">lysS</name>
    <name type="ordered locus">CV_1060</name>
</gene>
<keyword id="KW-0030">Aminoacyl-tRNA synthetase</keyword>
<keyword id="KW-0067">ATP-binding</keyword>
<keyword id="KW-0963">Cytoplasm</keyword>
<keyword id="KW-0436">Ligase</keyword>
<keyword id="KW-0460">Magnesium</keyword>
<keyword id="KW-0479">Metal-binding</keyword>
<keyword id="KW-0547">Nucleotide-binding</keyword>
<keyword id="KW-0648">Protein biosynthesis</keyword>
<keyword id="KW-1185">Reference proteome</keyword>
<comment type="catalytic activity">
    <reaction evidence="1">
        <text>tRNA(Lys) + L-lysine + ATP = L-lysyl-tRNA(Lys) + AMP + diphosphate</text>
        <dbReference type="Rhea" id="RHEA:20792"/>
        <dbReference type="Rhea" id="RHEA-COMP:9696"/>
        <dbReference type="Rhea" id="RHEA-COMP:9697"/>
        <dbReference type="ChEBI" id="CHEBI:30616"/>
        <dbReference type="ChEBI" id="CHEBI:32551"/>
        <dbReference type="ChEBI" id="CHEBI:33019"/>
        <dbReference type="ChEBI" id="CHEBI:78442"/>
        <dbReference type="ChEBI" id="CHEBI:78529"/>
        <dbReference type="ChEBI" id="CHEBI:456215"/>
        <dbReference type="EC" id="6.1.1.6"/>
    </reaction>
</comment>
<comment type="cofactor">
    <cofactor evidence="1">
        <name>Mg(2+)</name>
        <dbReference type="ChEBI" id="CHEBI:18420"/>
    </cofactor>
    <text evidence="1">Binds 3 Mg(2+) ions per subunit.</text>
</comment>
<comment type="subunit">
    <text evidence="1">Homodimer.</text>
</comment>
<comment type="subcellular location">
    <subcellularLocation>
        <location evidence="1">Cytoplasm</location>
    </subcellularLocation>
</comment>
<comment type="similarity">
    <text evidence="1">Belongs to the class-II aminoacyl-tRNA synthetase family.</text>
</comment>
<feature type="chain" id="PRO_0000152616" description="Lysine--tRNA ligase">
    <location>
        <begin position="1"/>
        <end position="502"/>
    </location>
</feature>
<feature type="region of interest" description="Disordered" evidence="2">
    <location>
        <begin position="1"/>
        <end position="22"/>
    </location>
</feature>
<feature type="binding site" evidence="1">
    <location>
        <position position="413"/>
    </location>
    <ligand>
        <name>Mg(2+)</name>
        <dbReference type="ChEBI" id="CHEBI:18420"/>
        <label>1</label>
    </ligand>
</feature>
<feature type="binding site" evidence="1">
    <location>
        <position position="420"/>
    </location>
    <ligand>
        <name>Mg(2+)</name>
        <dbReference type="ChEBI" id="CHEBI:18420"/>
        <label>1</label>
    </ligand>
</feature>
<feature type="binding site" evidence="1">
    <location>
        <position position="420"/>
    </location>
    <ligand>
        <name>Mg(2+)</name>
        <dbReference type="ChEBI" id="CHEBI:18420"/>
        <label>2</label>
    </ligand>
</feature>
<proteinExistence type="inferred from homology"/>
<organism>
    <name type="scientific">Chromobacterium violaceum (strain ATCC 12472 / DSM 30191 / JCM 1249 / CCUG 213 / NBRC 12614 / NCIMB 9131 / NCTC 9757 / MK)</name>
    <dbReference type="NCBI Taxonomy" id="243365"/>
    <lineage>
        <taxon>Bacteria</taxon>
        <taxon>Pseudomonadati</taxon>
        <taxon>Pseudomonadota</taxon>
        <taxon>Betaproteobacteria</taxon>
        <taxon>Neisseriales</taxon>
        <taxon>Chromobacteriaceae</taxon>
        <taxon>Chromobacterium</taxon>
    </lineage>
</organism>
<sequence>MSDHEQAQAQSQDENQIMAERRQKLQAIREKGIAYPNDFKRSHFAKPLQDDHAAKEAEALEAEKIEVAVAGRMMLKRVMGKASFATLQDVSGRIQAFISRDNVGEDVYADFKRWDLGDIVAVKGMLFKTKTGELTVQATEVRMLSKNIRPLPEKFHGIADQETKYRQRYADLIMSEESRETFIKRSKIVQKVRDVMVGEGYLEVETPMMHPIPGGASAKPFVTHHNALDMPLYLRIAPELYLKRLVVGGLERVFEINRNFRNEGMSTRHNPEFTMIEFYEAYSDYQRMMEMTETIIRECALVACGSTTVTYQGKEVDLGKPFDRFTIVQAIKHYNPQYTDAQLSDAAWVASEIKRLGGKLPPAPGLGSLQLALFEECAESLLWNPTFIIDYPVEVSPLARGSDTQPGLTERFELFIVGREHANGYSELNDPEDQAARFQAQVAQKDAGDDEAMHYDADYIRAMEYGLPPTGGCGIGIDRLVMLLTDAPSIRDVILFPHMRPE</sequence>
<reference key="1">
    <citation type="journal article" date="2003" name="Proc. Natl. Acad. Sci. U.S.A.">
        <title>The complete genome sequence of Chromobacterium violaceum reveals remarkable and exploitable bacterial adaptability.</title>
        <authorList>
            <person name="Vasconcelos A.T.R."/>
            <person name="de Almeida D.F."/>
            <person name="Hungria M."/>
            <person name="Guimaraes C.T."/>
            <person name="Antonio R.V."/>
            <person name="Almeida F.C."/>
            <person name="de Almeida L.G.P."/>
            <person name="de Almeida R."/>
            <person name="Alves-Gomes J.A."/>
            <person name="Andrade E.M."/>
            <person name="Araripe J."/>
            <person name="de Araujo M.F.F."/>
            <person name="Astolfi-Filho S."/>
            <person name="Azevedo V."/>
            <person name="Baptista A.J."/>
            <person name="Bataus L.A.M."/>
            <person name="Batista J.S."/>
            <person name="Belo A."/>
            <person name="van den Berg C."/>
            <person name="Bogo M."/>
            <person name="Bonatto S."/>
            <person name="Bordignon J."/>
            <person name="Brigido M.M."/>
            <person name="Brito C.A."/>
            <person name="Brocchi M."/>
            <person name="Burity H.A."/>
            <person name="Camargo A.A."/>
            <person name="Cardoso D.D.P."/>
            <person name="Carneiro N.P."/>
            <person name="Carraro D.M."/>
            <person name="Carvalho C.M.B."/>
            <person name="Cascardo J.C.M."/>
            <person name="Cavada B.S."/>
            <person name="Chueire L.M.O."/>
            <person name="Creczynski-Pasa T.B."/>
            <person name="Cunha-Junior N.C."/>
            <person name="Fagundes N."/>
            <person name="Falcao C.L."/>
            <person name="Fantinatti F."/>
            <person name="Farias I.P."/>
            <person name="Felipe M.S.S."/>
            <person name="Ferrari L.P."/>
            <person name="Ferro J.A."/>
            <person name="Ferro M.I.T."/>
            <person name="Franco G.R."/>
            <person name="Freitas N.S.A."/>
            <person name="Furlan L.R."/>
            <person name="Gazzinelli R.T."/>
            <person name="Gomes E.A."/>
            <person name="Goncalves P.R."/>
            <person name="Grangeiro T.B."/>
            <person name="Grattapaglia D."/>
            <person name="Grisard E.C."/>
            <person name="Hanna E.S."/>
            <person name="Jardim S.N."/>
            <person name="Laurino J."/>
            <person name="Leoi L.C.T."/>
            <person name="Lima L.F.A."/>
            <person name="Loureiro M.F."/>
            <person name="Lyra M.C.C.P."/>
            <person name="Madeira H.M.F."/>
            <person name="Manfio G.P."/>
            <person name="Maranhao A.Q."/>
            <person name="Martins W.S."/>
            <person name="di Mauro S.M.Z."/>
            <person name="de Medeiros S.R.B."/>
            <person name="Meissner R.V."/>
            <person name="Moreira M.A.M."/>
            <person name="Nascimento F.F."/>
            <person name="Nicolas M.F."/>
            <person name="Oliveira J.G."/>
            <person name="Oliveira S.C."/>
            <person name="Paixao R.F.C."/>
            <person name="Parente J.A."/>
            <person name="Pedrosa F.O."/>
            <person name="Pena S.D.J."/>
            <person name="Pereira J.O."/>
            <person name="Pereira M."/>
            <person name="Pinto L.S.R.C."/>
            <person name="Pinto L.S."/>
            <person name="Porto J.I.R."/>
            <person name="Potrich D.P."/>
            <person name="Ramalho-Neto C.E."/>
            <person name="Reis A.M.M."/>
            <person name="Rigo L.U."/>
            <person name="Rondinelli E."/>
            <person name="Santos E.B.P."/>
            <person name="Santos F.R."/>
            <person name="Schneider M.P.C."/>
            <person name="Seuanez H.N."/>
            <person name="Silva A.M.R."/>
            <person name="da Silva A.L.C."/>
            <person name="Silva D.W."/>
            <person name="Silva R."/>
            <person name="Simoes I.C."/>
            <person name="Simon D."/>
            <person name="Soares C.M.A."/>
            <person name="Soares R.B.A."/>
            <person name="Souza E.M."/>
            <person name="Souza K.R.L."/>
            <person name="Souza R.C."/>
            <person name="Steffens M.B.R."/>
            <person name="Steindel M."/>
            <person name="Teixeira S.R."/>
            <person name="Urmenyi T."/>
            <person name="Vettore A."/>
            <person name="Wassem R."/>
            <person name="Zaha A."/>
            <person name="Simpson A.J.G."/>
        </authorList>
    </citation>
    <scope>NUCLEOTIDE SEQUENCE [LARGE SCALE GENOMIC DNA]</scope>
    <source>
        <strain>ATCC 12472 / DSM 30191 / JCM 1249 / CCUG 213 / NBRC 12614 / NCIMB 9131 / NCTC 9757 / MK</strain>
    </source>
</reference>
<accession>Q7NZ62</accession>
<protein>
    <recommendedName>
        <fullName evidence="1">Lysine--tRNA ligase</fullName>
        <ecNumber evidence="1">6.1.1.6</ecNumber>
    </recommendedName>
    <alternativeName>
        <fullName evidence="1">Lysyl-tRNA synthetase</fullName>
        <shortName evidence="1">LysRS</shortName>
    </alternativeName>
</protein>
<evidence type="ECO:0000255" key="1">
    <source>
        <dbReference type="HAMAP-Rule" id="MF_00252"/>
    </source>
</evidence>
<evidence type="ECO:0000256" key="2">
    <source>
        <dbReference type="SAM" id="MobiDB-lite"/>
    </source>
</evidence>
<dbReference type="EC" id="6.1.1.6" evidence="1"/>
<dbReference type="EMBL" id="AE016825">
    <property type="protein sequence ID" value="AAQ58735.1"/>
    <property type="molecule type" value="Genomic_DNA"/>
</dbReference>
<dbReference type="RefSeq" id="WP_011134615.1">
    <property type="nucleotide sequence ID" value="NC_005085.1"/>
</dbReference>
<dbReference type="SMR" id="Q7NZ62"/>
<dbReference type="STRING" id="243365.CV_1060"/>
<dbReference type="KEGG" id="cvi:CV_1060"/>
<dbReference type="eggNOG" id="COG1190">
    <property type="taxonomic scope" value="Bacteria"/>
</dbReference>
<dbReference type="HOGENOM" id="CLU_008255_6_0_4"/>
<dbReference type="OrthoDB" id="9801152at2"/>
<dbReference type="Proteomes" id="UP000001424">
    <property type="component" value="Chromosome"/>
</dbReference>
<dbReference type="GO" id="GO:0005829">
    <property type="term" value="C:cytosol"/>
    <property type="evidence" value="ECO:0007669"/>
    <property type="project" value="TreeGrafter"/>
</dbReference>
<dbReference type="GO" id="GO:0005524">
    <property type="term" value="F:ATP binding"/>
    <property type="evidence" value="ECO:0007669"/>
    <property type="project" value="UniProtKB-UniRule"/>
</dbReference>
<dbReference type="GO" id="GO:0004824">
    <property type="term" value="F:lysine-tRNA ligase activity"/>
    <property type="evidence" value="ECO:0007669"/>
    <property type="project" value="UniProtKB-UniRule"/>
</dbReference>
<dbReference type="GO" id="GO:0000287">
    <property type="term" value="F:magnesium ion binding"/>
    <property type="evidence" value="ECO:0007669"/>
    <property type="project" value="UniProtKB-UniRule"/>
</dbReference>
<dbReference type="GO" id="GO:0000049">
    <property type="term" value="F:tRNA binding"/>
    <property type="evidence" value="ECO:0007669"/>
    <property type="project" value="TreeGrafter"/>
</dbReference>
<dbReference type="GO" id="GO:0006430">
    <property type="term" value="P:lysyl-tRNA aminoacylation"/>
    <property type="evidence" value="ECO:0007669"/>
    <property type="project" value="UniProtKB-UniRule"/>
</dbReference>
<dbReference type="CDD" id="cd00775">
    <property type="entry name" value="LysRS_core"/>
    <property type="match status" value="1"/>
</dbReference>
<dbReference type="CDD" id="cd04322">
    <property type="entry name" value="LysRS_N"/>
    <property type="match status" value="1"/>
</dbReference>
<dbReference type="FunFam" id="2.40.50.140:FF:000024">
    <property type="entry name" value="Lysine--tRNA ligase"/>
    <property type="match status" value="1"/>
</dbReference>
<dbReference type="FunFam" id="3.30.930.10:FF:000001">
    <property type="entry name" value="Lysine--tRNA ligase"/>
    <property type="match status" value="1"/>
</dbReference>
<dbReference type="Gene3D" id="3.30.930.10">
    <property type="entry name" value="Bira Bifunctional Protein, Domain 2"/>
    <property type="match status" value="1"/>
</dbReference>
<dbReference type="Gene3D" id="2.40.50.140">
    <property type="entry name" value="Nucleic acid-binding proteins"/>
    <property type="match status" value="1"/>
</dbReference>
<dbReference type="HAMAP" id="MF_00252">
    <property type="entry name" value="Lys_tRNA_synth_class2"/>
    <property type="match status" value="1"/>
</dbReference>
<dbReference type="InterPro" id="IPR004364">
    <property type="entry name" value="Aa-tRNA-synt_II"/>
</dbReference>
<dbReference type="InterPro" id="IPR006195">
    <property type="entry name" value="aa-tRNA-synth_II"/>
</dbReference>
<dbReference type="InterPro" id="IPR045864">
    <property type="entry name" value="aa-tRNA-synth_II/BPL/LPL"/>
</dbReference>
<dbReference type="InterPro" id="IPR002313">
    <property type="entry name" value="Lys-tRNA-ligase_II"/>
</dbReference>
<dbReference type="InterPro" id="IPR044136">
    <property type="entry name" value="Lys-tRNA-ligase_II_N"/>
</dbReference>
<dbReference type="InterPro" id="IPR018149">
    <property type="entry name" value="Lys-tRNA-synth_II_C"/>
</dbReference>
<dbReference type="InterPro" id="IPR012340">
    <property type="entry name" value="NA-bd_OB-fold"/>
</dbReference>
<dbReference type="InterPro" id="IPR004365">
    <property type="entry name" value="NA-bd_OB_tRNA"/>
</dbReference>
<dbReference type="NCBIfam" id="TIGR00499">
    <property type="entry name" value="lysS_bact"/>
    <property type="match status" value="1"/>
</dbReference>
<dbReference type="NCBIfam" id="NF001756">
    <property type="entry name" value="PRK00484.1"/>
    <property type="match status" value="1"/>
</dbReference>
<dbReference type="PANTHER" id="PTHR42918:SF15">
    <property type="entry name" value="LYSINE--TRNA LIGASE, CHLOROPLASTIC_MITOCHONDRIAL"/>
    <property type="match status" value="1"/>
</dbReference>
<dbReference type="PANTHER" id="PTHR42918">
    <property type="entry name" value="LYSYL-TRNA SYNTHETASE"/>
    <property type="match status" value="1"/>
</dbReference>
<dbReference type="Pfam" id="PF00152">
    <property type="entry name" value="tRNA-synt_2"/>
    <property type="match status" value="1"/>
</dbReference>
<dbReference type="Pfam" id="PF01336">
    <property type="entry name" value="tRNA_anti-codon"/>
    <property type="match status" value="1"/>
</dbReference>
<dbReference type="PRINTS" id="PR00982">
    <property type="entry name" value="TRNASYNTHLYS"/>
</dbReference>
<dbReference type="SUPFAM" id="SSF55681">
    <property type="entry name" value="Class II aaRS and biotin synthetases"/>
    <property type="match status" value="1"/>
</dbReference>
<dbReference type="SUPFAM" id="SSF50249">
    <property type="entry name" value="Nucleic acid-binding proteins"/>
    <property type="match status" value="1"/>
</dbReference>
<dbReference type="PROSITE" id="PS50862">
    <property type="entry name" value="AA_TRNA_LIGASE_II"/>
    <property type="match status" value="1"/>
</dbReference>
<name>SYK_CHRVO</name>